<organism>
    <name type="scientific">Xanthomonas oryzae pv. oryzae (strain KACC10331 / KXO85)</name>
    <dbReference type="NCBI Taxonomy" id="291331"/>
    <lineage>
        <taxon>Bacteria</taxon>
        <taxon>Pseudomonadati</taxon>
        <taxon>Pseudomonadota</taxon>
        <taxon>Gammaproteobacteria</taxon>
        <taxon>Lysobacterales</taxon>
        <taxon>Lysobacteraceae</taxon>
        <taxon>Xanthomonas</taxon>
    </lineage>
</organism>
<comment type="function">
    <text evidence="1">Transfers and isomerizes the ribose moiety from AdoMet to the 7-aminomethyl group of 7-deazaguanine (preQ1-tRNA) to give epoxyqueuosine (oQ-tRNA).</text>
</comment>
<comment type="catalytic activity">
    <reaction evidence="1">
        <text>7-aminomethyl-7-carbaguanosine(34) in tRNA + S-adenosyl-L-methionine = epoxyqueuosine(34) in tRNA + adenine + L-methionine + 2 H(+)</text>
        <dbReference type="Rhea" id="RHEA:32155"/>
        <dbReference type="Rhea" id="RHEA-COMP:10342"/>
        <dbReference type="Rhea" id="RHEA-COMP:18582"/>
        <dbReference type="ChEBI" id="CHEBI:15378"/>
        <dbReference type="ChEBI" id="CHEBI:16708"/>
        <dbReference type="ChEBI" id="CHEBI:57844"/>
        <dbReference type="ChEBI" id="CHEBI:59789"/>
        <dbReference type="ChEBI" id="CHEBI:82833"/>
        <dbReference type="ChEBI" id="CHEBI:194443"/>
        <dbReference type="EC" id="2.4.99.17"/>
    </reaction>
</comment>
<comment type="pathway">
    <text evidence="1">tRNA modification; tRNA-queuosine biosynthesis.</text>
</comment>
<comment type="subunit">
    <text evidence="1">Monomer.</text>
</comment>
<comment type="subcellular location">
    <subcellularLocation>
        <location evidence="1">Cytoplasm</location>
    </subcellularLocation>
</comment>
<comment type="similarity">
    <text evidence="1">Belongs to the QueA family.</text>
</comment>
<comment type="sequence caution" evidence="2">
    <conflict type="erroneous initiation">
        <sequence resource="EMBL-CDS" id="AAW75739"/>
    </conflict>
</comment>
<name>QUEA_XANOR</name>
<gene>
    <name evidence="1" type="primary">queA</name>
    <name type="ordered locus">XOO2485</name>
</gene>
<dbReference type="EC" id="2.4.99.17" evidence="1"/>
<dbReference type="EMBL" id="AE013598">
    <property type="protein sequence ID" value="AAW75739.1"/>
    <property type="status" value="ALT_INIT"/>
    <property type="molecule type" value="Genomic_DNA"/>
</dbReference>
<dbReference type="SMR" id="Q5GZY2"/>
<dbReference type="STRING" id="291331.XOO2485"/>
<dbReference type="KEGG" id="xoo:XOO2485"/>
<dbReference type="HOGENOM" id="CLU_039110_1_0_6"/>
<dbReference type="UniPathway" id="UPA00392"/>
<dbReference type="Proteomes" id="UP000006735">
    <property type="component" value="Chromosome"/>
</dbReference>
<dbReference type="GO" id="GO:0005737">
    <property type="term" value="C:cytoplasm"/>
    <property type="evidence" value="ECO:0007669"/>
    <property type="project" value="UniProtKB-SubCell"/>
</dbReference>
<dbReference type="GO" id="GO:0051075">
    <property type="term" value="F:S-adenosylmethionine:tRNA ribosyltransferase-isomerase activity"/>
    <property type="evidence" value="ECO:0007669"/>
    <property type="project" value="UniProtKB-EC"/>
</dbReference>
<dbReference type="GO" id="GO:0008616">
    <property type="term" value="P:queuosine biosynthetic process"/>
    <property type="evidence" value="ECO:0007669"/>
    <property type="project" value="UniProtKB-UniRule"/>
</dbReference>
<dbReference type="GO" id="GO:0002099">
    <property type="term" value="P:tRNA wobble guanine modification"/>
    <property type="evidence" value="ECO:0007669"/>
    <property type="project" value="TreeGrafter"/>
</dbReference>
<dbReference type="FunFam" id="2.40.10.240:FF:000003">
    <property type="entry name" value="S-adenosylmethionine:tRNA ribosyltransferase-isomerase"/>
    <property type="match status" value="1"/>
</dbReference>
<dbReference type="FunFam" id="3.40.1780.10:FF:000001">
    <property type="entry name" value="S-adenosylmethionine:tRNA ribosyltransferase-isomerase"/>
    <property type="match status" value="1"/>
</dbReference>
<dbReference type="Gene3D" id="2.40.10.240">
    <property type="entry name" value="QueA-like"/>
    <property type="match status" value="1"/>
</dbReference>
<dbReference type="Gene3D" id="3.40.1780.10">
    <property type="entry name" value="QueA-like"/>
    <property type="match status" value="1"/>
</dbReference>
<dbReference type="HAMAP" id="MF_00113">
    <property type="entry name" value="QueA"/>
    <property type="match status" value="1"/>
</dbReference>
<dbReference type="InterPro" id="IPR003699">
    <property type="entry name" value="QueA"/>
</dbReference>
<dbReference type="InterPro" id="IPR042118">
    <property type="entry name" value="QueA_dom1"/>
</dbReference>
<dbReference type="InterPro" id="IPR042119">
    <property type="entry name" value="QueA_dom2"/>
</dbReference>
<dbReference type="InterPro" id="IPR036100">
    <property type="entry name" value="QueA_sf"/>
</dbReference>
<dbReference type="NCBIfam" id="NF001140">
    <property type="entry name" value="PRK00147.1"/>
    <property type="match status" value="1"/>
</dbReference>
<dbReference type="NCBIfam" id="TIGR00113">
    <property type="entry name" value="queA"/>
    <property type="match status" value="1"/>
</dbReference>
<dbReference type="PANTHER" id="PTHR30307">
    <property type="entry name" value="S-ADENOSYLMETHIONINE:TRNA RIBOSYLTRANSFERASE-ISOMERASE"/>
    <property type="match status" value="1"/>
</dbReference>
<dbReference type="PANTHER" id="PTHR30307:SF0">
    <property type="entry name" value="S-ADENOSYLMETHIONINE:TRNA RIBOSYLTRANSFERASE-ISOMERASE"/>
    <property type="match status" value="1"/>
</dbReference>
<dbReference type="Pfam" id="PF02547">
    <property type="entry name" value="Queuosine_synth"/>
    <property type="match status" value="1"/>
</dbReference>
<dbReference type="SUPFAM" id="SSF111337">
    <property type="entry name" value="QueA-like"/>
    <property type="match status" value="1"/>
</dbReference>
<proteinExistence type="inferred from homology"/>
<protein>
    <recommendedName>
        <fullName evidence="1">S-adenosylmethionine:tRNA ribosyltransferase-isomerase</fullName>
        <ecNumber evidence="1">2.4.99.17</ecNumber>
    </recommendedName>
    <alternativeName>
        <fullName evidence="1">Queuosine biosynthesis protein QueA</fullName>
    </alternativeName>
</protein>
<evidence type="ECO:0000255" key="1">
    <source>
        <dbReference type="HAMAP-Rule" id="MF_00113"/>
    </source>
</evidence>
<evidence type="ECO:0000305" key="2"/>
<keyword id="KW-0963">Cytoplasm</keyword>
<keyword id="KW-0671">Queuosine biosynthesis</keyword>
<keyword id="KW-1185">Reference proteome</keyword>
<keyword id="KW-0949">S-adenosyl-L-methionine</keyword>
<keyword id="KW-0808">Transferase</keyword>
<reference key="1">
    <citation type="journal article" date="2005" name="Nucleic Acids Res.">
        <title>The genome sequence of Xanthomonas oryzae pathovar oryzae KACC10331, the bacterial blight pathogen of rice.</title>
        <authorList>
            <person name="Lee B.-M."/>
            <person name="Park Y.-J."/>
            <person name="Park D.-S."/>
            <person name="Kang H.-W."/>
            <person name="Kim J.-G."/>
            <person name="Song E.-S."/>
            <person name="Park I.-C."/>
            <person name="Yoon U.-H."/>
            <person name="Hahn J.-H."/>
            <person name="Koo B.-S."/>
            <person name="Lee G.-B."/>
            <person name="Kim H."/>
            <person name="Park H.-S."/>
            <person name="Yoon K.-O."/>
            <person name="Kim J.-H."/>
            <person name="Jung C.-H."/>
            <person name="Koh N.-H."/>
            <person name="Seo J.-S."/>
            <person name="Go S.-J."/>
        </authorList>
    </citation>
    <scope>NUCLEOTIDE SEQUENCE [LARGE SCALE GENOMIC DNA]</scope>
    <source>
        <strain>KACC10331 / KXO85</strain>
    </source>
</reference>
<feature type="chain" id="PRO_0000231393" description="S-adenosylmethionine:tRNA ribosyltransferase-isomerase">
    <location>
        <begin position="1"/>
        <end position="356"/>
    </location>
</feature>
<accession>Q5GZY2</accession>
<sequence length="356" mass="39555">MKKSDFHYDLPEELIAQAPLAERAASRLLVVPPSPQALADRRARDLPELLQPGDLLIFNDTRVIPARLFGQKASGGRVEILIERLLGERQARVQIGASKSPKAGSLIALDAGGQAEVLGRDGAFYLLRFEIPTPLEHWLLEAGRLPLPPYIRREPGVEDRERYQTVFAREVGAVAAPTAGLHFDEALLARLRERGVEFGHVTLHVGAGTFQPVRVDKLDQHVMHKEWLNVGAALVEQVRRTRARGGRVIAVGTTVVRSLESAWRTTDAAPEGELQPFAGETQIFILPGYRIRSVDAMVTNFHLPESTLMMMVSAFAGRERIFEAYHHAIAQRYRFFSYGDAMLLWSRAWGLGSGDS</sequence>